<dbReference type="EC" id="4.-.-.-" evidence="1"/>
<dbReference type="EMBL" id="CP000239">
    <property type="protein sequence ID" value="ABD00184.1"/>
    <property type="molecule type" value="Genomic_DNA"/>
</dbReference>
<dbReference type="SMR" id="Q2JT26"/>
<dbReference type="STRING" id="321327.CYA_2044"/>
<dbReference type="KEGG" id="cya:CYA_2044"/>
<dbReference type="eggNOG" id="ENOG502Z877">
    <property type="taxonomic scope" value="Bacteria"/>
</dbReference>
<dbReference type="HOGENOM" id="CLU_092589_0_0_3"/>
<dbReference type="OrthoDB" id="509174at2"/>
<dbReference type="Proteomes" id="UP000008818">
    <property type="component" value="Chromosome"/>
</dbReference>
<dbReference type="GO" id="GO:0016829">
    <property type="term" value="F:lyase activity"/>
    <property type="evidence" value="ECO:0007669"/>
    <property type="project" value="UniProtKB-KW"/>
</dbReference>
<dbReference type="CDD" id="cd16338">
    <property type="entry name" value="CpcT"/>
    <property type="match status" value="1"/>
</dbReference>
<dbReference type="Gene3D" id="2.40.128.590">
    <property type="entry name" value="CpcT/CpeT domain"/>
    <property type="match status" value="1"/>
</dbReference>
<dbReference type="HAMAP" id="MF_01460">
    <property type="entry name" value="Chrphore_lyase_CpxT"/>
    <property type="match status" value="1"/>
</dbReference>
<dbReference type="InterPro" id="IPR010404">
    <property type="entry name" value="CpcT/CpeT"/>
</dbReference>
<dbReference type="InterPro" id="IPR038672">
    <property type="entry name" value="CpcT/CpeT_sf"/>
</dbReference>
<dbReference type="PANTHER" id="PTHR35137">
    <property type="entry name" value="CHROMOPHORE LYASE CRL, CHLOROPLASTIC"/>
    <property type="match status" value="1"/>
</dbReference>
<dbReference type="PANTHER" id="PTHR35137:SF1">
    <property type="entry name" value="CHROMOPHORE LYASE CRL, CHLOROPLASTIC"/>
    <property type="match status" value="1"/>
</dbReference>
<dbReference type="Pfam" id="PF06206">
    <property type="entry name" value="CpeT"/>
    <property type="match status" value="1"/>
</dbReference>
<gene>
    <name evidence="1" type="primary">cpcT2</name>
    <name type="ordered locus">CYA_2044</name>
</gene>
<reference key="1">
    <citation type="journal article" date="2007" name="ISME J.">
        <title>Population level functional diversity in a microbial community revealed by comparative genomic and metagenomic analyses.</title>
        <authorList>
            <person name="Bhaya D."/>
            <person name="Grossman A.R."/>
            <person name="Steunou A.-S."/>
            <person name="Khuri N."/>
            <person name="Cohan F.M."/>
            <person name="Hamamura N."/>
            <person name="Melendrez M.C."/>
            <person name="Bateson M.M."/>
            <person name="Ward D.M."/>
            <person name="Heidelberg J.F."/>
        </authorList>
    </citation>
    <scope>NUCLEOTIDE SEQUENCE [LARGE SCALE GENOMIC DNA]</scope>
    <source>
        <strain>JA-3-3Ab</strain>
    </source>
</reference>
<keyword id="KW-0456">Lyase</keyword>
<evidence type="ECO:0000255" key="1">
    <source>
        <dbReference type="HAMAP-Rule" id="MF_01460"/>
    </source>
</evidence>
<feature type="chain" id="PRO_0000403165" description="Chromophore lyase CpcT/CpeT 2">
    <location>
        <begin position="1"/>
        <end position="199"/>
    </location>
</feature>
<organism>
    <name type="scientific">Synechococcus sp. (strain JA-3-3Ab)</name>
    <name type="common">Cyanobacteria bacterium Yellowstone A-Prime</name>
    <dbReference type="NCBI Taxonomy" id="321327"/>
    <lineage>
        <taxon>Bacteria</taxon>
        <taxon>Bacillati</taxon>
        <taxon>Cyanobacteriota</taxon>
        <taxon>Cyanophyceae</taxon>
        <taxon>Synechococcales</taxon>
        <taxon>Synechococcaceae</taxon>
        <taxon>Synechococcus</taxon>
    </lineage>
</organism>
<sequence>MESTSSPELLQMARWLAGDFSNQEQAWENPPFFASIRVAYRPLPTAVLGGIGFYVEQAYSGHLEEPYRQAVVELTQVGDGIVIRNYRPLQPQRWRGCARGRAEQLSQLSAADLAYLPGCDVQVKRQGSLFVGVTEPGCRCCVVRNGQTTYLQTTLHLSENEFCSHDRGMDPVTHRQVWGAVAGPFRFRKVVDWQAELLQ</sequence>
<protein>
    <recommendedName>
        <fullName evidence="1">Chromophore lyase CpcT/CpeT 2</fullName>
        <ecNumber evidence="1">4.-.-.-</ecNumber>
    </recommendedName>
</protein>
<proteinExistence type="inferred from homology"/>
<name>CPXT2_SYNJA</name>
<accession>Q2JT26</accession>
<comment type="function">
    <text evidence="1">Covalently attaches a chromophore to Cys residue(s) of phycobiliproteins.</text>
</comment>
<comment type="similarity">
    <text evidence="1">Belongs to the CpcT/CpeT biliprotein lyase family.</text>
</comment>